<feature type="chain" id="PRO_0000266222" description="CTP synthase">
    <location>
        <begin position="1"/>
        <end position="545"/>
    </location>
</feature>
<feature type="domain" description="Glutamine amidotransferase type-1" evidence="1">
    <location>
        <begin position="291"/>
        <end position="542"/>
    </location>
</feature>
<feature type="region of interest" description="Amidoligase domain" evidence="1">
    <location>
        <begin position="1"/>
        <end position="266"/>
    </location>
</feature>
<feature type="active site" description="Nucleophile; for glutamine hydrolysis" evidence="1">
    <location>
        <position position="379"/>
    </location>
</feature>
<feature type="active site" evidence="1">
    <location>
        <position position="515"/>
    </location>
</feature>
<feature type="active site" evidence="1">
    <location>
        <position position="517"/>
    </location>
</feature>
<feature type="binding site" evidence="1">
    <location>
        <position position="14"/>
    </location>
    <ligand>
        <name>CTP</name>
        <dbReference type="ChEBI" id="CHEBI:37563"/>
        <note>allosteric inhibitor</note>
    </ligand>
</feature>
<feature type="binding site" evidence="1">
    <location>
        <position position="14"/>
    </location>
    <ligand>
        <name>UTP</name>
        <dbReference type="ChEBI" id="CHEBI:46398"/>
    </ligand>
</feature>
<feature type="binding site" evidence="1">
    <location>
        <begin position="15"/>
        <end position="20"/>
    </location>
    <ligand>
        <name>ATP</name>
        <dbReference type="ChEBI" id="CHEBI:30616"/>
    </ligand>
</feature>
<feature type="binding site" evidence="1">
    <location>
        <position position="72"/>
    </location>
    <ligand>
        <name>ATP</name>
        <dbReference type="ChEBI" id="CHEBI:30616"/>
    </ligand>
</feature>
<feature type="binding site" evidence="1">
    <location>
        <position position="72"/>
    </location>
    <ligand>
        <name>Mg(2+)</name>
        <dbReference type="ChEBI" id="CHEBI:18420"/>
    </ligand>
</feature>
<feature type="binding site" evidence="1">
    <location>
        <position position="140"/>
    </location>
    <ligand>
        <name>Mg(2+)</name>
        <dbReference type="ChEBI" id="CHEBI:18420"/>
    </ligand>
</feature>
<feature type="binding site" evidence="1">
    <location>
        <begin position="147"/>
        <end position="149"/>
    </location>
    <ligand>
        <name>CTP</name>
        <dbReference type="ChEBI" id="CHEBI:37563"/>
        <note>allosteric inhibitor</note>
    </ligand>
</feature>
<feature type="binding site" evidence="1">
    <location>
        <begin position="187"/>
        <end position="192"/>
    </location>
    <ligand>
        <name>CTP</name>
        <dbReference type="ChEBI" id="CHEBI:37563"/>
        <note>allosteric inhibitor</note>
    </ligand>
</feature>
<feature type="binding site" evidence="1">
    <location>
        <begin position="187"/>
        <end position="192"/>
    </location>
    <ligand>
        <name>UTP</name>
        <dbReference type="ChEBI" id="CHEBI:46398"/>
    </ligand>
</feature>
<feature type="binding site" evidence="1">
    <location>
        <position position="223"/>
    </location>
    <ligand>
        <name>CTP</name>
        <dbReference type="ChEBI" id="CHEBI:37563"/>
        <note>allosteric inhibitor</note>
    </ligand>
</feature>
<feature type="binding site" evidence="1">
    <location>
        <position position="223"/>
    </location>
    <ligand>
        <name>UTP</name>
        <dbReference type="ChEBI" id="CHEBI:46398"/>
    </ligand>
</feature>
<feature type="binding site" evidence="1">
    <location>
        <begin position="239"/>
        <end position="241"/>
    </location>
    <ligand>
        <name>ATP</name>
        <dbReference type="ChEBI" id="CHEBI:30616"/>
    </ligand>
</feature>
<feature type="binding site" evidence="1">
    <location>
        <position position="352"/>
    </location>
    <ligand>
        <name>L-glutamine</name>
        <dbReference type="ChEBI" id="CHEBI:58359"/>
    </ligand>
</feature>
<feature type="binding site" evidence="1">
    <location>
        <begin position="380"/>
        <end position="383"/>
    </location>
    <ligand>
        <name>L-glutamine</name>
        <dbReference type="ChEBI" id="CHEBI:58359"/>
    </ligand>
</feature>
<feature type="binding site" evidence="1">
    <location>
        <position position="403"/>
    </location>
    <ligand>
        <name>L-glutamine</name>
        <dbReference type="ChEBI" id="CHEBI:58359"/>
    </ligand>
</feature>
<feature type="binding site" evidence="1">
    <location>
        <position position="470"/>
    </location>
    <ligand>
        <name>L-glutamine</name>
        <dbReference type="ChEBI" id="CHEBI:58359"/>
    </ligand>
</feature>
<evidence type="ECO:0000255" key="1">
    <source>
        <dbReference type="HAMAP-Rule" id="MF_01227"/>
    </source>
</evidence>
<dbReference type="EC" id="6.3.4.2" evidence="1"/>
<dbReference type="EMBL" id="AP008232">
    <property type="protein sequence ID" value="BAE73787.1"/>
    <property type="molecule type" value="Genomic_DNA"/>
</dbReference>
<dbReference type="RefSeq" id="WP_011410485.1">
    <property type="nucleotide sequence ID" value="NC_007712.1"/>
</dbReference>
<dbReference type="SMR" id="Q2NVN8"/>
<dbReference type="STRING" id="343509.SG0512"/>
<dbReference type="MEROPS" id="C26.964"/>
<dbReference type="KEGG" id="sgl:SG0512"/>
<dbReference type="eggNOG" id="COG0504">
    <property type="taxonomic scope" value="Bacteria"/>
</dbReference>
<dbReference type="HOGENOM" id="CLU_011675_5_0_6"/>
<dbReference type="OrthoDB" id="9801107at2"/>
<dbReference type="BioCyc" id="SGLO343509:SGP1_RS04575-MONOMER"/>
<dbReference type="UniPathway" id="UPA00159">
    <property type="reaction ID" value="UER00277"/>
</dbReference>
<dbReference type="Proteomes" id="UP000001932">
    <property type="component" value="Chromosome"/>
</dbReference>
<dbReference type="GO" id="GO:0005829">
    <property type="term" value="C:cytosol"/>
    <property type="evidence" value="ECO:0007669"/>
    <property type="project" value="TreeGrafter"/>
</dbReference>
<dbReference type="GO" id="GO:0005524">
    <property type="term" value="F:ATP binding"/>
    <property type="evidence" value="ECO:0007669"/>
    <property type="project" value="UniProtKB-KW"/>
</dbReference>
<dbReference type="GO" id="GO:0003883">
    <property type="term" value="F:CTP synthase activity"/>
    <property type="evidence" value="ECO:0007669"/>
    <property type="project" value="UniProtKB-UniRule"/>
</dbReference>
<dbReference type="GO" id="GO:0004359">
    <property type="term" value="F:glutaminase activity"/>
    <property type="evidence" value="ECO:0007669"/>
    <property type="project" value="RHEA"/>
</dbReference>
<dbReference type="GO" id="GO:0042802">
    <property type="term" value="F:identical protein binding"/>
    <property type="evidence" value="ECO:0007669"/>
    <property type="project" value="TreeGrafter"/>
</dbReference>
<dbReference type="GO" id="GO:0046872">
    <property type="term" value="F:metal ion binding"/>
    <property type="evidence" value="ECO:0007669"/>
    <property type="project" value="UniProtKB-KW"/>
</dbReference>
<dbReference type="GO" id="GO:0044210">
    <property type="term" value="P:'de novo' CTP biosynthetic process"/>
    <property type="evidence" value="ECO:0007669"/>
    <property type="project" value="UniProtKB-UniRule"/>
</dbReference>
<dbReference type="GO" id="GO:0019856">
    <property type="term" value="P:pyrimidine nucleobase biosynthetic process"/>
    <property type="evidence" value="ECO:0007669"/>
    <property type="project" value="TreeGrafter"/>
</dbReference>
<dbReference type="CDD" id="cd03113">
    <property type="entry name" value="CTPS_N"/>
    <property type="match status" value="1"/>
</dbReference>
<dbReference type="CDD" id="cd01746">
    <property type="entry name" value="GATase1_CTP_Synthase"/>
    <property type="match status" value="1"/>
</dbReference>
<dbReference type="FunFam" id="3.40.50.300:FF:000009">
    <property type="entry name" value="CTP synthase"/>
    <property type="match status" value="1"/>
</dbReference>
<dbReference type="FunFam" id="3.40.50.880:FF:000002">
    <property type="entry name" value="CTP synthase"/>
    <property type="match status" value="1"/>
</dbReference>
<dbReference type="Gene3D" id="3.40.50.880">
    <property type="match status" value="1"/>
</dbReference>
<dbReference type="Gene3D" id="3.40.50.300">
    <property type="entry name" value="P-loop containing nucleotide triphosphate hydrolases"/>
    <property type="match status" value="1"/>
</dbReference>
<dbReference type="HAMAP" id="MF_01227">
    <property type="entry name" value="PyrG"/>
    <property type="match status" value="1"/>
</dbReference>
<dbReference type="InterPro" id="IPR029062">
    <property type="entry name" value="Class_I_gatase-like"/>
</dbReference>
<dbReference type="InterPro" id="IPR004468">
    <property type="entry name" value="CTP_synthase"/>
</dbReference>
<dbReference type="InterPro" id="IPR017456">
    <property type="entry name" value="CTP_synthase_N"/>
</dbReference>
<dbReference type="InterPro" id="IPR017926">
    <property type="entry name" value="GATASE"/>
</dbReference>
<dbReference type="InterPro" id="IPR033828">
    <property type="entry name" value="GATase1_CTP_Synthase"/>
</dbReference>
<dbReference type="InterPro" id="IPR027417">
    <property type="entry name" value="P-loop_NTPase"/>
</dbReference>
<dbReference type="NCBIfam" id="NF003792">
    <property type="entry name" value="PRK05380.1"/>
    <property type="match status" value="1"/>
</dbReference>
<dbReference type="NCBIfam" id="TIGR00337">
    <property type="entry name" value="PyrG"/>
    <property type="match status" value="1"/>
</dbReference>
<dbReference type="PANTHER" id="PTHR11550">
    <property type="entry name" value="CTP SYNTHASE"/>
    <property type="match status" value="1"/>
</dbReference>
<dbReference type="PANTHER" id="PTHR11550:SF0">
    <property type="entry name" value="CTP SYNTHASE-RELATED"/>
    <property type="match status" value="1"/>
</dbReference>
<dbReference type="Pfam" id="PF06418">
    <property type="entry name" value="CTP_synth_N"/>
    <property type="match status" value="1"/>
</dbReference>
<dbReference type="Pfam" id="PF00117">
    <property type="entry name" value="GATase"/>
    <property type="match status" value="1"/>
</dbReference>
<dbReference type="SUPFAM" id="SSF52317">
    <property type="entry name" value="Class I glutamine amidotransferase-like"/>
    <property type="match status" value="1"/>
</dbReference>
<dbReference type="SUPFAM" id="SSF52540">
    <property type="entry name" value="P-loop containing nucleoside triphosphate hydrolases"/>
    <property type="match status" value="1"/>
</dbReference>
<dbReference type="PROSITE" id="PS51273">
    <property type="entry name" value="GATASE_TYPE_1"/>
    <property type="match status" value="1"/>
</dbReference>
<gene>
    <name evidence="1" type="primary">pyrG</name>
    <name type="ordered locus">SG0512</name>
</gene>
<protein>
    <recommendedName>
        <fullName evidence="1">CTP synthase</fullName>
        <ecNumber evidence="1">6.3.4.2</ecNumber>
    </recommendedName>
    <alternativeName>
        <fullName evidence="1">Cytidine 5'-triphosphate synthase</fullName>
    </alternativeName>
    <alternativeName>
        <fullName evidence="1">Cytidine triphosphate synthetase</fullName>
        <shortName evidence="1">CTP synthetase</shortName>
        <shortName evidence="1">CTPS</shortName>
    </alternativeName>
    <alternativeName>
        <fullName evidence="1">UTP--ammonia ligase</fullName>
    </alternativeName>
</protein>
<proteinExistence type="inferred from homology"/>
<comment type="function">
    <text evidence="1">Catalyzes the ATP-dependent amination of UTP to CTP with either L-glutamine or ammonia as the source of nitrogen. Regulates intracellular CTP levels through interactions with the four ribonucleotide triphosphates.</text>
</comment>
<comment type="catalytic activity">
    <reaction evidence="1">
        <text>UTP + L-glutamine + ATP + H2O = CTP + L-glutamate + ADP + phosphate + 2 H(+)</text>
        <dbReference type="Rhea" id="RHEA:26426"/>
        <dbReference type="ChEBI" id="CHEBI:15377"/>
        <dbReference type="ChEBI" id="CHEBI:15378"/>
        <dbReference type="ChEBI" id="CHEBI:29985"/>
        <dbReference type="ChEBI" id="CHEBI:30616"/>
        <dbReference type="ChEBI" id="CHEBI:37563"/>
        <dbReference type="ChEBI" id="CHEBI:43474"/>
        <dbReference type="ChEBI" id="CHEBI:46398"/>
        <dbReference type="ChEBI" id="CHEBI:58359"/>
        <dbReference type="ChEBI" id="CHEBI:456216"/>
        <dbReference type="EC" id="6.3.4.2"/>
    </reaction>
</comment>
<comment type="catalytic activity">
    <reaction evidence="1">
        <text>L-glutamine + H2O = L-glutamate + NH4(+)</text>
        <dbReference type="Rhea" id="RHEA:15889"/>
        <dbReference type="ChEBI" id="CHEBI:15377"/>
        <dbReference type="ChEBI" id="CHEBI:28938"/>
        <dbReference type="ChEBI" id="CHEBI:29985"/>
        <dbReference type="ChEBI" id="CHEBI:58359"/>
    </reaction>
</comment>
<comment type="catalytic activity">
    <reaction evidence="1">
        <text>UTP + NH4(+) + ATP = CTP + ADP + phosphate + 2 H(+)</text>
        <dbReference type="Rhea" id="RHEA:16597"/>
        <dbReference type="ChEBI" id="CHEBI:15378"/>
        <dbReference type="ChEBI" id="CHEBI:28938"/>
        <dbReference type="ChEBI" id="CHEBI:30616"/>
        <dbReference type="ChEBI" id="CHEBI:37563"/>
        <dbReference type="ChEBI" id="CHEBI:43474"/>
        <dbReference type="ChEBI" id="CHEBI:46398"/>
        <dbReference type="ChEBI" id="CHEBI:456216"/>
    </reaction>
</comment>
<comment type="activity regulation">
    <text evidence="1">Allosterically activated by GTP, when glutamine is the substrate; GTP has no effect on the reaction when ammonia is the substrate. The allosteric effector GTP functions by stabilizing the protein conformation that binds the tetrahedral intermediate(s) formed during glutamine hydrolysis. Inhibited by the product CTP, via allosteric rather than competitive inhibition.</text>
</comment>
<comment type="pathway">
    <text evidence="1">Pyrimidine metabolism; CTP biosynthesis via de novo pathway; CTP from UDP: step 2/2.</text>
</comment>
<comment type="subunit">
    <text evidence="1">Homotetramer.</text>
</comment>
<comment type="miscellaneous">
    <text evidence="1">CTPSs have evolved a hybrid strategy for distinguishing between UTP and CTP. The overlapping regions of the product feedback inhibitory and substrate sites recognize a common feature in both compounds, the triphosphate moiety. To differentiate isosteric substrate and product pyrimidine rings, an additional pocket far from the expected kinase/ligase catalytic site, specifically recognizes the cytosine and ribose portions of the product inhibitor.</text>
</comment>
<comment type="similarity">
    <text evidence="1">Belongs to the CTP synthase family.</text>
</comment>
<accession>Q2NVN8</accession>
<sequence>MTTNYIFVTGGVVSSLGKGIAAASLAAILEARGLNVTIMKLDPYINVDPGTMSPIQHGEVFVTEDGAETDLDLGHYERFIRTKMSRRNNFTTGRIYSDVLRKERRGDYLGATIQVIPHITNAIKERIIEGGEDHDVVLVEIGGTVGDIESLPFLEAIRQMAVEVGREHTLYMHLTLVPYMAASGEVKTKPTQHSVKELLSIGIQPDVLICRSDRSVPNNERAKIALFCNVPEKAVISLKDVDSIYKIPALLKSQGLDDYICKRFGLNCPEADLSEWEQVIYQQANPVGEVTIGMVGKYIALPDAYKSVIEALKHAGLKNRLTVNIRLIDSQDVETRGVEILKDLDAILIPGGFGYRGVEGKILTAQYAREQNIPYLGICLGMQVALIEFARHVAGMQDANSTEFVPDCKYPVVALITEWRDEDGNVEMRSEQSHLGGTMRLGSQLCHLADDSLARSLYGEATILERHRHRYEVNNMLLKHLESAGLRVAGWSGDHKLVEIIEYPDHPWFVASQFHPEFTSTPRDGHPLFAGLVKAAGEYQKRAQK</sequence>
<name>PYRG_SODGM</name>
<organism>
    <name type="scientific">Sodalis glossinidius (strain morsitans)</name>
    <dbReference type="NCBI Taxonomy" id="343509"/>
    <lineage>
        <taxon>Bacteria</taxon>
        <taxon>Pseudomonadati</taxon>
        <taxon>Pseudomonadota</taxon>
        <taxon>Gammaproteobacteria</taxon>
        <taxon>Enterobacterales</taxon>
        <taxon>Bruguierivoracaceae</taxon>
        <taxon>Sodalis</taxon>
    </lineage>
</organism>
<reference key="1">
    <citation type="journal article" date="2006" name="Genome Res.">
        <title>Massive genome erosion and functional adaptations provide insights into the symbiotic lifestyle of Sodalis glossinidius in the tsetse host.</title>
        <authorList>
            <person name="Toh H."/>
            <person name="Weiss B.L."/>
            <person name="Perkin S.A.H."/>
            <person name="Yamashita A."/>
            <person name="Oshima K."/>
            <person name="Hattori M."/>
            <person name="Aksoy S."/>
        </authorList>
    </citation>
    <scope>NUCLEOTIDE SEQUENCE [LARGE SCALE GENOMIC DNA]</scope>
    <source>
        <strain>morsitans</strain>
    </source>
</reference>
<keyword id="KW-0067">ATP-binding</keyword>
<keyword id="KW-0315">Glutamine amidotransferase</keyword>
<keyword id="KW-0436">Ligase</keyword>
<keyword id="KW-0460">Magnesium</keyword>
<keyword id="KW-0479">Metal-binding</keyword>
<keyword id="KW-0547">Nucleotide-binding</keyword>
<keyword id="KW-0665">Pyrimidine biosynthesis</keyword>